<keyword id="KW-0067">ATP-binding</keyword>
<keyword id="KW-0963">Cytoplasm</keyword>
<keyword id="KW-0436">Ligase</keyword>
<keyword id="KW-0460">Magnesium</keyword>
<keyword id="KW-0479">Metal-binding</keyword>
<keyword id="KW-0547">Nucleotide-binding</keyword>
<keyword id="KW-0658">Purine biosynthesis</keyword>
<reference key="1">
    <citation type="journal article" date="2005" name="J. Bacteriol.">
        <title>Whole-genome sequencing of Staphylococcus haemolyticus uncovers the extreme plasticity of its genome and the evolution of human-colonizing staphylococcal species.</title>
        <authorList>
            <person name="Takeuchi F."/>
            <person name="Watanabe S."/>
            <person name="Baba T."/>
            <person name="Yuzawa H."/>
            <person name="Ito T."/>
            <person name="Morimoto Y."/>
            <person name="Kuroda M."/>
            <person name="Cui L."/>
            <person name="Takahashi M."/>
            <person name="Ankai A."/>
            <person name="Baba S."/>
            <person name="Fukui S."/>
            <person name="Lee J.C."/>
            <person name="Hiramatsu K."/>
        </authorList>
    </citation>
    <scope>NUCLEOTIDE SEQUENCE [LARGE SCALE GENOMIC DNA]</scope>
    <source>
        <strain>JCSC1435</strain>
    </source>
</reference>
<name>PURL_STAHJ</name>
<evidence type="ECO:0000255" key="1">
    <source>
        <dbReference type="HAMAP-Rule" id="MF_00420"/>
    </source>
</evidence>
<sequence length="729" mass="79476">MSKFIEPSIEEIKLEKLYQDMGLSDAEYNKVCEILGREPNFTEVGIFSVMWSEHCSYKHSKPFLKQFPTTGEHVLMGPGEGAGVVDIGDNQAVVFKVESHNHPSAIEPYQGAATGVGGIIRDIVSIGARPINLLNSLRFGELSVKQNQRLLKGVVRGIGGYGNCIGIPTTAGEIEFDDRYDGNPLVNAMCVGVIDHDMIQKGTAKGEGNSVIYVGLKTGRDGIHGATFASEELTEESESKRPSVQIGDPFVGKKLMEATLEAITFDELVGIQDMGAAGLTSSSSEMAAKGGSGLELHLDQVPTREPGISPYEMMLSETQERMLLVVEKGTEQKFLDLFEKHELDSAVIGEVTNTDRFVLKYEDEVFADIPVQSLADEAPVYVLEGEEKEYNTSKNDYSSINVEETFKKLLIHPTIASKHYLYEQYDQQVGANTIIKPGLQSSVVRVEGTNKAVASTIDGEARYVFNQPYEGGKMVVAEAYRNLIAVGATPLAMTDCLNYGSPEKKEIYQQLIDSTKGMSEACEVLKTPVVSGNVSLYNETRGTSIFPTPVVGMVGLIEDIDYLKDFHPEAGHKLYLVGETRDDFGGSQVEKLLYGKVNHEFEAIDLSDEVNKGEAVKNTIRSGVASHVQTVGKGGLLITLARISAHYGLGLEASIDLSDAQLFSETQGRYIIVVKEGQTLNIDEAIEIGQLTDVDEFKVTNAQSSIVEKVSEIKESWEGAIAQCLTTVD</sequence>
<feature type="chain" id="PRO_0000236667" description="Phosphoribosylformylglycinamidine synthase subunit PurL">
    <location>
        <begin position="1"/>
        <end position="729"/>
    </location>
</feature>
<feature type="active site" evidence="1">
    <location>
        <position position="54"/>
    </location>
</feature>
<feature type="active site" description="Proton acceptor" evidence="1">
    <location>
        <position position="100"/>
    </location>
</feature>
<feature type="binding site" evidence="1">
    <location>
        <position position="57"/>
    </location>
    <ligand>
        <name>ATP</name>
        <dbReference type="ChEBI" id="CHEBI:30616"/>
    </ligand>
</feature>
<feature type="binding site" evidence="1">
    <location>
        <position position="96"/>
    </location>
    <ligand>
        <name>ATP</name>
        <dbReference type="ChEBI" id="CHEBI:30616"/>
    </ligand>
</feature>
<feature type="binding site" evidence="1">
    <location>
        <position position="98"/>
    </location>
    <ligand>
        <name>Mg(2+)</name>
        <dbReference type="ChEBI" id="CHEBI:18420"/>
        <label>1</label>
    </ligand>
</feature>
<feature type="binding site" evidence="1">
    <location>
        <begin position="99"/>
        <end position="102"/>
    </location>
    <ligand>
        <name>substrate</name>
    </ligand>
</feature>
<feature type="binding site" evidence="1">
    <location>
        <position position="121"/>
    </location>
    <ligand>
        <name>substrate</name>
    </ligand>
</feature>
<feature type="binding site" evidence="1">
    <location>
        <position position="122"/>
    </location>
    <ligand>
        <name>Mg(2+)</name>
        <dbReference type="ChEBI" id="CHEBI:18420"/>
        <label>2</label>
    </ligand>
</feature>
<feature type="binding site" evidence="1">
    <location>
        <position position="245"/>
    </location>
    <ligand>
        <name>substrate</name>
    </ligand>
</feature>
<feature type="binding site" evidence="1">
    <location>
        <position position="273"/>
    </location>
    <ligand>
        <name>Mg(2+)</name>
        <dbReference type="ChEBI" id="CHEBI:18420"/>
        <label>2</label>
    </ligand>
</feature>
<feature type="binding site" evidence="1">
    <location>
        <begin position="317"/>
        <end position="319"/>
    </location>
    <ligand>
        <name>substrate</name>
    </ligand>
</feature>
<feature type="binding site" evidence="1">
    <location>
        <position position="495"/>
    </location>
    <ligand>
        <name>ATP</name>
        <dbReference type="ChEBI" id="CHEBI:30616"/>
    </ligand>
</feature>
<feature type="binding site" evidence="1">
    <location>
        <position position="532"/>
    </location>
    <ligand>
        <name>ATP</name>
        <dbReference type="ChEBI" id="CHEBI:30616"/>
    </ligand>
</feature>
<feature type="binding site" evidence="1">
    <location>
        <position position="533"/>
    </location>
    <ligand>
        <name>Mg(2+)</name>
        <dbReference type="ChEBI" id="CHEBI:18420"/>
        <label>1</label>
    </ligand>
</feature>
<feature type="binding site" evidence="1">
    <location>
        <position position="535"/>
    </location>
    <ligand>
        <name>substrate</name>
    </ligand>
</feature>
<organism>
    <name type="scientific">Staphylococcus haemolyticus (strain JCSC1435)</name>
    <dbReference type="NCBI Taxonomy" id="279808"/>
    <lineage>
        <taxon>Bacteria</taxon>
        <taxon>Bacillati</taxon>
        <taxon>Bacillota</taxon>
        <taxon>Bacilli</taxon>
        <taxon>Bacillales</taxon>
        <taxon>Staphylococcaceae</taxon>
        <taxon>Staphylococcus</taxon>
    </lineage>
</organism>
<gene>
    <name evidence="1" type="primary">purL</name>
    <name type="ordered locus">SH1888</name>
</gene>
<protein>
    <recommendedName>
        <fullName evidence="1">Phosphoribosylformylglycinamidine synthase subunit PurL</fullName>
        <shortName evidence="1">FGAM synthase</shortName>
        <ecNumber evidence="1">6.3.5.3</ecNumber>
    </recommendedName>
    <alternativeName>
        <fullName evidence="1">Formylglycinamide ribonucleotide amidotransferase subunit II</fullName>
        <shortName evidence="1">FGAR amidotransferase II</shortName>
        <shortName evidence="1">FGAR-AT II</shortName>
    </alternativeName>
    <alternativeName>
        <fullName evidence="1">Glutamine amidotransferase PurL</fullName>
    </alternativeName>
    <alternativeName>
        <fullName evidence="1">Phosphoribosylformylglycinamidine synthase subunit II</fullName>
    </alternativeName>
</protein>
<accession>Q4L578</accession>
<dbReference type="EC" id="6.3.5.3" evidence="1"/>
<dbReference type="EMBL" id="AP006716">
    <property type="protein sequence ID" value="BAE05197.1"/>
    <property type="molecule type" value="Genomic_DNA"/>
</dbReference>
<dbReference type="RefSeq" id="WP_011276161.1">
    <property type="nucleotide sequence ID" value="NC_007168.1"/>
</dbReference>
<dbReference type="SMR" id="Q4L578"/>
<dbReference type="KEGG" id="sha:SH1888"/>
<dbReference type="eggNOG" id="COG0046">
    <property type="taxonomic scope" value="Bacteria"/>
</dbReference>
<dbReference type="HOGENOM" id="CLU_003100_0_1_9"/>
<dbReference type="OrthoDB" id="9804441at2"/>
<dbReference type="UniPathway" id="UPA00074">
    <property type="reaction ID" value="UER00128"/>
</dbReference>
<dbReference type="Proteomes" id="UP000000543">
    <property type="component" value="Chromosome"/>
</dbReference>
<dbReference type="GO" id="GO:0005737">
    <property type="term" value="C:cytoplasm"/>
    <property type="evidence" value="ECO:0007669"/>
    <property type="project" value="UniProtKB-SubCell"/>
</dbReference>
<dbReference type="GO" id="GO:0005524">
    <property type="term" value="F:ATP binding"/>
    <property type="evidence" value="ECO:0007669"/>
    <property type="project" value="UniProtKB-UniRule"/>
</dbReference>
<dbReference type="GO" id="GO:0000287">
    <property type="term" value="F:magnesium ion binding"/>
    <property type="evidence" value="ECO:0007669"/>
    <property type="project" value="UniProtKB-UniRule"/>
</dbReference>
<dbReference type="GO" id="GO:0004642">
    <property type="term" value="F:phosphoribosylformylglycinamidine synthase activity"/>
    <property type="evidence" value="ECO:0007669"/>
    <property type="project" value="UniProtKB-UniRule"/>
</dbReference>
<dbReference type="GO" id="GO:0006189">
    <property type="term" value="P:'de novo' IMP biosynthetic process"/>
    <property type="evidence" value="ECO:0007669"/>
    <property type="project" value="UniProtKB-UniRule"/>
</dbReference>
<dbReference type="CDD" id="cd02203">
    <property type="entry name" value="PurL_repeat1"/>
    <property type="match status" value="1"/>
</dbReference>
<dbReference type="CDD" id="cd02204">
    <property type="entry name" value="PurL_repeat2"/>
    <property type="match status" value="1"/>
</dbReference>
<dbReference type="FunFam" id="3.30.1330.10:FF:000004">
    <property type="entry name" value="Phosphoribosylformylglycinamidine synthase subunit PurL"/>
    <property type="match status" value="1"/>
</dbReference>
<dbReference type="Gene3D" id="3.90.650.10">
    <property type="entry name" value="PurM-like C-terminal domain"/>
    <property type="match status" value="2"/>
</dbReference>
<dbReference type="Gene3D" id="3.30.1330.10">
    <property type="entry name" value="PurM-like, N-terminal domain"/>
    <property type="match status" value="2"/>
</dbReference>
<dbReference type="HAMAP" id="MF_00420">
    <property type="entry name" value="PurL_2"/>
    <property type="match status" value="1"/>
</dbReference>
<dbReference type="InterPro" id="IPR010074">
    <property type="entry name" value="PRibForGlyAmidine_synth_PurL"/>
</dbReference>
<dbReference type="InterPro" id="IPR041609">
    <property type="entry name" value="PurL_linker"/>
</dbReference>
<dbReference type="InterPro" id="IPR010918">
    <property type="entry name" value="PurM-like_C_dom"/>
</dbReference>
<dbReference type="InterPro" id="IPR036676">
    <property type="entry name" value="PurM-like_C_sf"/>
</dbReference>
<dbReference type="InterPro" id="IPR016188">
    <property type="entry name" value="PurM-like_N"/>
</dbReference>
<dbReference type="InterPro" id="IPR036921">
    <property type="entry name" value="PurM-like_N_sf"/>
</dbReference>
<dbReference type="NCBIfam" id="TIGR01736">
    <property type="entry name" value="FGAM_synth_II"/>
    <property type="match status" value="1"/>
</dbReference>
<dbReference type="NCBIfam" id="NF002290">
    <property type="entry name" value="PRK01213.1"/>
    <property type="match status" value="1"/>
</dbReference>
<dbReference type="PANTHER" id="PTHR43555">
    <property type="entry name" value="PHOSPHORIBOSYLFORMYLGLYCINAMIDINE SYNTHASE SUBUNIT PURL"/>
    <property type="match status" value="1"/>
</dbReference>
<dbReference type="PANTHER" id="PTHR43555:SF1">
    <property type="entry name" value="PHOSPHORIBOSYLFORMYLGLYCINAMIDINE SYNTHASE SUBUNIT PURL"/>
    <property type="match status" value="1"/>
</dbReference>
<dbReference type="Pfam" id="PF00586">
    <property type="entry name" value="AIRS"/>
    <property type="match status" value="2"/>
</dbReference>
<dbReference type="Pfam" id="PF02769">
    <property type="entry name" value="AIRS_C"/>
    <property type="match status" value="2"/>
</dbReference>
<dbReference type="Pfam" id="PF18072">
    <property type="entry name" value="FGAR-AT_linker"/>
    <property type="match status" value="1"/>
</dbReference>
<dbReference type="PIRSF" id="PIRSF001587">
    <property type="entry name" value="FGAM_synthase_II"/>
    <property type="match status" value="1"/>
</dbReference>
<dbReference type="SUPFAM" id="SSF56042">
    <property type="entry name" value="PurM C-terminal domain-like"/>
    <property type="match status" value="2"/>
</dbReference>
<dbReference type="SUPFAM" id="SSF55326">
    <property type="entry name" value="PurM N-terminal domain-like"/>
    <property type="match status" value="2"/>
</dbReference>
<comment type="function">
    <text evidence="1">Part of the phosphoribosylformylglycinamidine synthase complex involved in the purines biosynthetic pathway. Catalyzes the ATP-dependent conversion of formylglycinamide ribonucleotide (FGAR) and glutamine to yield formylglycinamidine ribonucleotide (FGAM) and glutamate. The FGAM synthase complex is composed of three subunits. PurQ produces an ammonia molecule by converting glutamine to glutamate. PurL transfers the ammonia molecule to FGAR to form FGAM in an ATP-dependent manner. PurS interacts with PurQ and PurL and is thought to assist in the transfer of the ammonia molecule from PurQ to PurL.</text>
</comment>
<comment type="catalytic activity">
    <reaction evidence="1">
        <text>N(2)-formyl-N(1)-(5-phospho-beta-D-ribosyl)glycinamide + L-glutamine + ATP + H2O = 2-formamido-N(1)-(5-O-phospho-beta-D-ribosyl)acetamidine + L-glutamate + ADP + phosphate + H(+)</text>
        <dbReference type="Rhea" id="RHEA:17129"/>
        <dbReference type="ChEBI" id="CHEBI:15377"/>
        <dbReference type="ChEBI" id="CHEBI:15378"/>
        <dbReference type="ChEBI" id="CHEBI:29985"/>
        <dbReference type="ChEBI" id="CHEBI:30616"/>
        <dbReference type="ChEBI" id="CHEBI:43474"/>
        <dbReference type="ChEBI" id="CHEBI:58359"/>
        <dbReference type="ChEBI" id="CHEBI:147286"/>
        <dbReference type="ChEBI" id="CHEBI:147287"/>
        <dbReference type="ChEBI" id="CHEBI:456216"/>
        <dbReference type="EC" id="6.3.5.3"/>
    </reaction>
</comment>
<comment type="pathway">
    <text evidence="1">Purine metabolism; IMP biosynthesis via de novo pathway; 5-amino-1-(5-phospho-D-ribosyl)imidazole from N(2)-formyl-N(1)-(5-phospho-D-ribosyl)glycinamide: step 1/2.</text>
</comment>
<comment type="subunit">
    <text evidence="1">Monomer. Part of the FGAM synthase complex composed of 1 PurL, 1 PurQ and 2 PurS subunits.</text>
</comment>
<comment type="subcellular location">
    <subcellularLocation>
        <location evidence="1">Cytoplasm</location>
    </subcellularLocation>
</comment>
<comment type="similarity">
    <text evidence="1">Belongs to the FGAMS family.</text>
</comment>
<proteinExistence type="inferred from homology"/>